<feature type="chain" id="PRO_1000025072" description="UDP-2,3-diacylglucosamine hydrolase">
    <location>
        <begin position="1"/>
        <end position="242"/>
    </location>
</feature>
<feature type="binding site" evidence="1">
    <location>
        <position position="7"/>
    </location>
    <ligand>
        <name>Mn(2+)</name>
        <dbReference type="ChEBI" id="CHEBI:29035"/>
        <label>1</label>
    </ligand>
</feature>
<feature type="binding site" evidence="1">
    <location>
        <position position="9"/>
    </location>
    <ligand>
        <name>Mn(2+)</name>
        <dbReference type="ChEBI" id="CHEBI:29035"/>
        <label>1</label>
    </ligand>
</feature>
<feature type="binding site" evidence="1">
    <location>
        <position position="40"/>
    </location>
    <ligand>
        <name>Mn(2+)</name>
        <dbReference type="ChEBI" id="CHEBI:29035"/>
        <label>1</label>
    </ligand>
</feature>
<feature type="binding site" evidence="1">
    <location>
        <position position="40"/>
    </location>
    <ligand>
        <name>Mn(2+)</name>
        <dbReference type="ChEBI" id="CHEBI:29035"/>
        <label>2</label>
    </ligand>
</feature>
<feature type="binding site" evidence="1">
    <location>
        <begin position="78"/>
        <end position="79"/>
    </location>
    <ligand>
        <name>substrate</name>
    </ligand>
</feature>
<feature type="binding site" evidence="1">
    <location>
        <position position="78"/>
    </location>
    <ligand>
        <name>Mn(2+)</name>
        <dbReference type="ChEBI" id="CHEBI:29035"/>
        <label>2</label>
    </ligand>
</feature>
<feature type="binding site" evidence="1">
    <location>
        <position position="113"/>
    </location>
    <ligand>
        <name>Mn(2+)</name>
        <dbReference type="ChEBI" id="CHEBI:29035"/>
        <label>2</label>
    </ligand>
</feature>
<feature type="binding site" evidence="1">
    <location>
        <position position="121"/>
    </location>
    <ligand>
        <name>substrate</name>
    </ligand>
</feature>
<feature type="binding site" evidence="1">
    <location>
        <position position="159"/>
    </location>
    <ligand>
        <name>substrate</name>
    </ligand>
</feature>
<feature type="binding site" evidence="1">
    <location>
        <position position="163"/>
    </location>
    <ligand>
        <name>substrate</name>
    </ligand>
</feature>
<feature type="binding site" evidence="1">
    <location>
        <position position="166"/>
    </location>
    <ligand>
        <name>substrate</name>
    </ligand>
</feature>
<feature type="binding site" evidence="1">
    <location>
        <position position="194"/>
    </location>
    <ligand>
        <name>Mn(2+)</name>
        <dbReference type="ChEBI" id="CHEBI:29035"/>
        <label>2</label>
    </ligand>
</feature>
<feature type="binding site" evidence="1">
    <location>
        <position position="194"/>
    </location>
    <ligand>
        <name>substrate</name>
    </ligand>
</feature>
<feature type="binding site" evidence="1">
    <location>
        <position position="196"/>
    </location>
    <ligand>
        <name>Mn(2+)</name>
        <dbReference type="ChEBI" id="CHEBI:29035"/>
        <label>1</label>
    </ligand>
</feature>
<sequence>MILLISDLHLEEKRPDITRAFLHFLATRARQAEALYILGDFFEVWIGDDGMTPFQHEIAGALRELSDSGTRIYLMHGNRDFLIGKRFCREAGCTLLGDPHRVQMNGEPVLLMHGDSLCTLDVGYMKLRRWLRNPLSLLILRNLPLATRQKLARKLRNESRAQTRMKASEIVDVTPEEVVRVMGEYDVRTLIHGHTHRPAVHELEVNGQPARRIVLGDWDRQGWALQVDGEGFNQAPFELTPA</sequence>
<evidence type="ECO:0000255" key="1">
    <source>
        <dbReference type="HAMAP-Rule" id="MF_00575"/>
    </source>
</evidence>
<protein>
    <recommendedName>
        <fullName evidence="1">UDP-2,3-diacylglucosamine hydrolase</fullName>
        <ecNumber evidence="1">3.6.1.54</ecNumber>
    </recommendedName>
    <alternativeName>
        <fullName evidence="1">UDP-2,3-diacylglucosamine diphosphatase</fullName>
    </alternativeName>
</protein>
<gene>
    <name evidence="1" type="primary">lpxH</name>
    <name type="ordered locus">Pmen_2574</name>
</gene>
<organism>
    <name type="scientific">Ectopseudomonas mendocina (strain ymp)</name>
    <name type="common">Pseudomonas mendocina</name>
    <dbReference type="NCBI Taxonomy" id="399739"/>
    <lineage>
        <taxon>Bacteria</taxon>
        <taxon>Pseudomonadati</taxon>
        <taxon>Pseudomonadota</taxon>
        <taxon>Gammaproteobacteria</taxon>
        <taxon>Pseudomonadales</taxon>
        <taxon>Pseudomonadaceae</taxon>
        <taxon>Ectopseudomonas</taxon>
    </lineage>
</organism>
<comment type="function">
    <text evidence="1">Hydrolyzes the pyrophosphate bond of UDP-2,3-diacylglucosamine to yield 2,3-diacylglucosamine 1-phosphate (lipid X) and UMP by catalyzing the attack of water at the alpha-P atom. Involved in the biosynthesis of lipid A, a phosphorylated glycolipid that anchors the lipopolysaccharide to the outer membrane of the cell.</text>
</comment>
<comment type="catalytic activity">
    <reaction evidence="1">
        <text>UDP-2-N,3-O-bis[(3R)-3-hydroxytetradecanoyl]-alpha-D-glucosamine + H2O = 2-N,3-O-bis[(3R)-3-hydroxytetradecanoyl]-alpha-D-glucosaminyl 1-phosphate + UMP + 2 H(+)</text>
        <dbReference type="Rhea" id="RHEA:25213"/>
        <dbReference type="ChEBI" id="CHEBI:15377"/>
        <dbReference type="ChEBI" id="CHEBI:15378"/>
        <dbReference type="ChEBI" id="CHEBI:57865"/>
        <dbReference type="ChEBI" id="CHEBI:57957"/>
        <dbReference type="ChEBI" id="CHEBI:78847"/>
        <dbReference type="EC" id="3.6.1.54"/>
    </reaction>
</comment>
<comment type="cofactor">
    <cofactor evidence="1">
        <name>Mn(2+)</name>
        <dbReference type="ChEBI" id="CHEBI:29035"/>
    </cofactor>
    <text evidence="1">Binds 2 Mn(2+) ions per subunit in a binuclear metal center.</text>
</comment>
<comment type="pathway">
    <text evidence="1">Glycolipid biosynthesis; lipid IV(A) biosynthesis; lipid IV(A) from (3R)-3-hydroxytetradecanoyl-[acyl-carrier-protein] and UDP-N-acetyl-alpha-D-glucosamine: step 4/6.</text>
</comment>
<comment type="subcellular location">
    <subcellularLocation>
        <location evidence="1">Cell inner membrane</location>
        <topology evidence="1">Peripheral membrane protein</topology>
        <orientation evidence="1">Cytoplasmic side</orientation>
    </subcellularLocation>
</comment>
<comment type="similarity">
    <text evidence="1">Belongs to the LpxH family.</text>
</comment>
<dbReference type="EC" id="3.6.1.54" evidence="1"/>
<dbReference type="EMBL" id="CP000680">
    <property type="protein sequence ID" value="ABP85330.1"/>
    <property type="molecule type" value="Genomic_DNA"/>
</dbReference>
<dbReference type="SMR" id="A4XVG4"/>
<dbReference type="STRING" id="399739.Pmen_2574"/>
<dbReference type="KEGG" id="pmy:Pmen_2574"/>
<dbReference type="PATRIC" id="fig|399739.8.peg.2600"/>
<dbReference type="eggNOG" id="COG2908">
    <property type="taxonomic scope" value="Bacteria"/>
</dbReference>
<dbReference type="HOGENOM" id="CLU_074586_0_0_6"/>
<dbReference type="OrthoDB" id="9783283at2"/>
<dbReference type="UniPathway" id="UPA00359">
    <property type="reaction ID" value="UER00480"/>
</dbReference>
<dbReference type="GO" id="GO:0005737">
    <property type="term" value="C:cytoplasm"/>
    <property type="evidence" value="ECO:0007669"/>
    <property type="project" value="InterPro"/>
</dbReference>
<dbReference type="GO" id="GO:0019897">
    <property type="term" value="C:extrinsic component of plasma membrane"/>
    <property type="evidence" value="ECO:0007669"/>
    <property type="project" value="UniProtKB-UniRule"/>
</dbReference>
<dbReference type="GO" id="GO:0030145">
    <property type="term" value="F:manganese ion binding"/>
    <property type="evidence" value="ECO:0007669"/>
    <property type="project" value="UniProtKB-UniRule"/>
</dbReference>
<dbReference type="GO" id="GO:0008758">
    <property type="term" value="F:UDP-2,3-diacylglucosamine hydrolase activity"/>
    <property type="evidence" value="ECO:0007669"/>
    <property type="project" value="UniProtKB-UniRule"/>
</dbReference>
<dbReference type="GO" id="GO:0009245">
    <property type="term" value="P:lipid A biosynthetic process"/>
    <property type="evidence" value="ECO:0007669"/>
    <property type="project" value="UniProtKB-UniRule"/>
</dbReference>
<dbReference type="CDD" id="cd07398">
    <property type="entry name" value="MPP_YbbF-LpxH"/>
    <property type="match status" value="1"/>
</dbReference>
<dbReference type="Gene3D" id="3.60.21.10">
    <property type="match status" value="1"/>
</dbReference>
<dbReference type="HAMAP" id="MF_00575">
    <property type="entry name" value="LpxH"/>
    <property type="match status" value="1"/>
</dbReference>
<dbReference type="InterPro" id="IPR004843">
    <property type="entry name" value="Calcineurin-like_PHP_ApaH"/>
</dbReference>
<dbReference type="InterPro" id="IPR043461">
    <property type="entry name" value="LpxH-like"/>
</dbReference>
<dbReference type="InterPro" id="IPR029052">
    <property type="entry name" value="Metallo-depent_PP-like"/>
</dbReference>
<dbReference type="InterPro" id="IPR010138">
    <property type="entry name" value="UDP-diacylglucosamine_Hdrlase"/>
</dbReference>
<dbReference type="NCBIfam" id="TIGR01854">
    <property type="entry name" value="lipid_A_lpxH"/>
    <property type="match status" value="1"/>
</dbReference>
<dbReference type="NCBIfam" id="NF003743">
    <property type="entry name" value="PRK05340.1"/>
    <property type="match status" value="1"/>
</dbReference>
<dbReference type="PANTHER" id="PTHR34990:SF1">
    <property type="entry name" value="UDP-2,3-DIACYLGLUCOSAMINE HYDROLASE"/>
    <property type="match status" value="1"/>
</dbReference>
<dbReference type="PANTHER" id="PTHR34990">
    <property type="entry name" value="UDP-2,3-DIACYLGLUCOSAMINE HYDROLASE-RELATED"/>
    <property type="match status" value="1"/>
</dbReference>
<dbReference type="Pfam" id="PF00149">
    <property type="entry name" value="Metallophos"/>
    <property type="match status" value="1"/>
</dbReference>
<dbReference type="SUPFAM" id="SSF56300">
    <property type="entry name" value="Metallo-dependent phosphatases"/>
    <property type="match status" value="1"/>
</dbReference>
<keyword id="KW-0997">Cell inner membrane</keyword>
<keyword id="KW-1003">Cell membrane</keyword>
<keyword id="KW-0378">Hydrolase</keyword>
<keyword id="KW-0441">Lipid A biosynthesis</keyword>
<keyword id="KW-0444">Lipid biosynthesis</keyword>
<keyword id="KW-0443">Lipid metabolism</keyword>
<keyword id="KW-0464">Manganese</keyword>
<keyword id="KW-0472">Membrane</keyword>
<keyword id="KW-0479">Metal-binding</keyword>
<accession>A4XVG4</accession>
<proteinExistence type="inferred from homology"/>
<reference key="1">
    <citation type="submission" date="2007-04" db="EMBL/GenBank/DDBJ databases">
        <title>Complete sequence of Pseudomonas mendocina ymp.</title>
        <authorList>
            <consortium name="US DOE Joint Genome Institute"/>
            <person name="Copeland A."/>
            <person name="Lucas S."/>
            <person name="Lapidus A."/>
            <person name="Barry K."/>
            <person name="Glavina del Rio T."/>
            <person name="Dalin E."/>
            <person name="Tice H."/>
            <person name="Pitluck S."/>
            <person name="Kiss H."/>
            <person name="Brettin T."/>
            <person name="Detter J.C."/>
            <person name="Bruce D."/>
            <person name="Han C."/>
            <person name="Schmutz J."/>
            <person name="Larimer F."/>
            <person name="Land M."/>
            <person name="Hauser L."/>
            <person name="Kyrpides N."/>
            <person name="Mikhailova N."/>
            <person name="Hersman L."/>
            <person name="Dubois J."/>
            <person name="Maurice P."/>
            <person name="Richardson P."/>
        </authorList>
    </citation>
    <scope>NUCLEOTIDE SEQUENCE [LARGE SCALE GENOMIC DNA]</scope>
    <source>
        <strain>ymp</strain>
    </source>
</reference>
<name>LPXH_ECTM1</name>